<reference key="1">
    <citation type="journal article" date="1997" name="Mol. Phylogenet. Evol.">
        <title>A multigene assessment of phylogenetic relationships within the dasyurid marsupial subfamily Sminthopsinae.</title>
        <authorList>
            <person name="Krajewski C."/>
            <person name="Blacket M."/>
            <person name="Buckley L."/>
            <person name="Westerman M."/>
        </authorList>
    </citation>
    <scope>NUCLEOTIDE SEQUENCE [GENOMIC DNA]</scope>
</reference>
<organism>
    <name type="scientific">Planigale maculata sinualis</name>
    <name type="common">Common planigale</name>
    <dbReference type="NCBI Taxonomy" id="34893"/>
    <lineage>
        <taxon>Eukaryota</taxon>
        <taxon>Metazoa</taxon>
        <taxon>Chordata</taxon>
        <taxon>Craniata</taxon>
        <taxon>Vertebrata</taxon>
        <taxon>Euteleostomi</taxon>
        <taxon>Mammalia</taxon>
        <taxon>Metatheria</taxon>
        <taxon>Dasyuromorphia</taxon>
        <taxon>Dasyuridae</taxon>
        <taxon>Planigale</taxon>
    </lineage>
</organism>
<sequence length="62" mass="8377">MARCRRHSRSRSRSRNQCQRRRRRRYNRRRTYRRSRRHSRRRRGRRRGCSRRRYSRRGRRRY</sequence>
<dbReference type="EMBL" id="AF001592">
    <property type="protein sequence ID" value="AAB91382.1"/>
    <property type="molecule type" value="Genomic_DNA"/>
</dbReference>
<dbReference type="GO" id="GO:0000786">
    <property type="term" value="C:nucleosome"/>
    <property type="evidence" value="ECO:0007669"/>
    <property type="project" value="UniProtKB-KW"/>
</dbReference>
<dbReference type="GO" id="GO:0005634">
    <property type="term" value="C:nucleus"/>
    <property type="evidence" value="ECO:0007669"/>
    <property type="project" value="UniProtKB-SubCell"/>
</dbReference>
<dbReference type="GO" id="GO:0003677">
    <property type="term" value="F:DNA binding"/>
    <property type="evidence" value="ECO:0007669"/>
    <property type="project" value="UniProtKB-KW"/>
</dbReference>
<dbReference type="GO" id="GO:0030154">
    <property type="term" value="P:cell differentiation"/>
    <property type="evidence" value="ECO:0007669"/>
    <property type="project" value="UniProtKB-KW"/>
</dbReference>
<dbReference type="GO" id="GO:0030261">
    <property type="term" value="P:chromosome condensation"/>
    <property type="evidence" value="ECO:0007669"/>
    <property type="project" value="UniProtKB-KW"/>
</dbReference>
<dbReference type="GO" id="GO:0007283">
    <property type="term" value="P:spermatogenesis"/>
    <property type="evidence" value="ECO:0007669"/>
    <property type="project" value="UniProtKB-KW"/>
</dbReference>
<proteinExistence type="evidence at transcript level"/>
<comment type="function">
    <text>Protamines substitute for histones in the chromatin of sperm during the haploid phase of spermatogenesis. They compact sperm DNA into a highly condensed, stable and inactive complex.</text>
</comment>
<comment type="subcellular location">
    <subcellularLocation>
        <location>Nucleus</location>
    </subcellularLocation>
    <subcellularLocation>
        <location>Chromosome</location>
    </subcellularLocation>
</comment>
<comment type="tissue specificity">
    <text>Testis.</text>
</comment>
<comment type="similarity">
    <text evidence="2">Belongs to the protamine P1 family.</text>
</comment>
<feature type="chain" id="PRO_0000191536" description="Sperm protamine P1">
    <location>
        <begin position="1"/>
        <end position="62"/>
    </location>
</feature>
<feature type="region of interest" description="Disordered" evidence="1">
    <location>
        <begin position="1"/>
        <end position="62"/>
    </location>
</feature>
<evidence type="ECO:0000256" key="1">
    <source>
        <dbReference type="SAM" id="MobiDB-lite"/>
    </source>
</evidence>
<evidence type="ECO:0000305" key="2"/>
<accession>O18746</accession>
<name>HSP1_PLAMS</name>
<keyword id="KW-0158">Chromosome</keyword>
<keyword id="KW-0217">Developmental protein</keyword>
<keyword id="KW-0221">Differentiation</keyword>
<keyword id="KW-0226">DNA condensation</keyword>
<keyword id="KW-0238">DNA-binding</keyword>
<keyword id="KW-0544">Nucleosome core</keyword>
<keyword id="KW-0539">Nucleus</keyword>
<keyword id="KW-0744">Spermatogenesis</keyword>
<protein>
    <recommendedName>
        <fullName>Sperm protamine P1</fullName>
    </recommendedName>
</protein>
<gene>
    <name type="primary">PRM1</name>
</gene>